<feature type="chain" id="PRO_0000307275" description="Large neutral amino acids transporter small subunit 4">
    <location>
        <begin position="1"/>
        <end position="568"/>
    </location>
</feature>
<feature type="transmembrane region" description="Helical" evidence="3">
    <location>
        <begin position="20"/>
        <end position="40"/>
    </location>
</feature>
<feature type="transmembrane region" description="Helical" evidence="3">
    <location>
        <begin position="89"/>
        <end position="109"/>
    </location>
</feature>
<feature type="transmembrane region" description="Helical" evidence="3">
    <location>
        <begin position="119"/>
        <end position="139"/>
    </location>
</feature>
<feature type="transmembrane region" description="Helical" evidence="3">
    <location>
        <begin position="142"/>
        <end position="162"/>
    </location>
</feature>
<feature type="transmembrane region" description="Helical" evidence="3">
    <location>
        <begin position="176"/>
        <end position="196"/>
    </location>
</feature>
<feature type="transmembrane region" description="Helical" evidence="3">
    <location>
        <begin position="202"/>
        <end position="222"/>
    </location>
</feature>
<feature type="transmembrane region" description="Helical" evidence="3">
    <location>
        <begin position="322"/>
        <end position="342"/>
    </location>
</feature>
<feature type="transmembrane region" description="Helical" evidence="3">
    <location>
        <begin position="364"/>
        <end position="384"/>
    </location>
</feature>
<feature type="transmembrane region" description="Helical" evidence="3">
    <location>
        <begin position="434"/>
        <end position="454"/>
    </location>
</feature>
<feature type="transmembrane region" description="Helical" evidence="3">
    <location>
        <begin position="461"/>
        <end position="481"/>
    </location>
</feature>
<feature type="transmembrane region" description="Helical" evidence="3">
    <location>
        <begin position="489"/>
        <end position="509"/>
    </location>
</feature>
<feature type="transmembrane region" description="Helical" evidence="3">
    <location>
        <begin position="516"/>
        <end position="536"/>
    </location>
</feature>
<feature type="glycosylation site" description="N-linked (GlcNAc...) asparagine" evidence="3">
    <location>
        <position position="55"/>
    </location>
</feature>
<feature type="glycosylation site" description="N-linked (GlcNAc...) asparagine" evidence="3">
    <location>
        <position position="60"/>
    </location>
</feature>
<feature type="glycosylation site" description="N-linked (GlcNAc...) asparagine" evidence="3">
    <location>
        <position position="64"/>
    </location>
</feature>
<feature type="glycosylation site" description="N-linked (GlcNAc...) asparagine" evidence="3">
    <location>
        <position position="422"/>
    </location>
</feature>
<accession>A4IHK6</accession>
<protein>
    <recommendedName>
        <fullName evidence="2">Large neutral amino acids transporter small subunit 4</fullName>
    </recommendedName>
    <alternativeName>
        <fullName>L-type amino acid transporter 4</fullName>
    </alternativeName>
    <alternativeName>
        <fullName>Solute carrier family 43 member 2</fullName>
    </alternativeName>
</protein>
<reference key="1">
    <citation type="submission" date="2007-03" db="EMBL/GenBank/DDBJ databases">
        <authorList>
            <consortium name="NIH - Xenopus Gene Collection (XGC) project"/>
        </authorList>
    </citation>
    <scope>NUCLEOTIDE SEQUENCE [LARGE SCALE MRNA]</scope>
    <source>
        <tissue>Embryo</tissue>
    </source>
</reference>
<keyword id="KW-0029">Amino-acid transport</keyword>
<keyword id="KW-1003">Cell membrane</keyword>
<keyword id="KW-0325">Glycoprotein</keyword>
<keyword id="KW-0472">Membrane</keyword>
<keyword id="KW-1185">Reference proteome</keyword>
<keyword id="KW-0812">Transmembrane</keyword>
<keyword id="KW-1133">Transmembrane helix</keyword>
<keyword id="KW-0813">Transport</keyword>
<gene>
    <name evidence="2" type="primary">slc43a2</name>
    <name type="synonym">lat4</name>
</gene>
<sequence>MAPTLATAHRRRWWMACTAVVENLFFSAVLLGWGSLLIMLKSEGFYSYLCHYPDNTTYHNSTGNETNQELVMDMNGWLICKEQDEMLNLAFTVGSFLLSAISLPLGIIMDKYGPRKLRLSGSASFGVSCLLIAYGASNPNSLSVLIFVALCLNGFGGMCMTFTSLTLPNMFGDLRSTFIALMIGSYASSAVTFPFIKVIYDLGVSFITILIVWAACAGLVFFNCFFNWPLEPFPGPEDMDYTVKIKFSWLGFDHKITGKQFYKQVTTVGRRLSVGGSMKNPKELSALQNGNKLCLSTVDLEVKCQADNAATPSFMKSVFSPILLLSLITMCVTQLRLIFYMGAMNNILEFLVEGDMDTVSLYTSIFGVLQLLCLLTAPVIGYIMDWKLKDCDDGKEDADEKDTNTDGKKKKKRDRQIQKITNATRAFAFTNFLLVGFGITCLINNLPLQILSFILHTIVRGFIHSAVGGLYAAVYPSTHFGSLTGLQSLISALFALLQQPLFLAMMGPLEGDPLWVNVGLLGVSMFGFCLPLYLIFYKRSLERQRKQKIEDSKLYLKINGTPDHEAFV</sequence>
<comment type="function">
    <text evidence="2">Uniporter that mediates the transport of the stereospecific L-phenylalanine, L-methionine and L-branched-chain amino acids, between the extracellular space and the cytoplasm and may control the transepithelial (re)absorption of neutral amino acid in kidney and small intestine. The transport activity is mediated through facilitated diffusion and is sodium ions-, chloride ions- and pH-independent.</text>
</comment>
<comment type="catalytic activity">
    <reaction evidence="2">
        <text>L-leucine(in) = L-leucine(out)</text>
        <dbReference type="Rhea" id="RHEA:73011"/>
        <dbReference type="ChEBI" id="CHEBI:57427"/>
    </reaction>
</comment>
<comment type="catalytic activity">
    <reaction evidence="2">
        <text>L-isoleucine(in) = L-isoleucine(out)</text>
        <dbReference type="Rhea" id="RHEA:70943"/>
        <dbReference type="ChEBI" id="CHEBI:58045"/>
    </reaction>
</comment>
<comment type="catalytic activity">
    <reaction evidence="2">
        <text>L-methionine(in) = L-methionine(out)</text>
        <dbReference type="Rhea" id="RHEA:70939"/>
        <dbReference type="ChEBI" id="CHEBI:57844"/>
    </reaction>
</comment>
<comment type="catalytic activity">
    <reaction evidence="2">
        <text>L-phenylalanine(in) = L-phenylalanine(out)</text>
        <dbReference type="Rhea" id="RHEA:27950"/>
        <dbReference type="ChEBI" id="CHEBI:58095"/>
    </reaction>
</comment>
<comment type="subcellular location">
    <subcellularLocation>
        <location evidence="1">Cell membrane</location>
        <topology evidence="3">Multi-pass membrane protein</topology>
    </subcellularLocation>
    <subcellularLocation>
        <location evidence="1">Basolateral cell membrane</location>
    </subcellularLocation>
    <text evidence="1">Located at the basolateral membrane in the small intestine enterocytes, kidney proximal tubule, thick ascending limb and, to a minor extent, of distal convoluted tubule epithelial cells.</text>
</comment>
<comment type="PTM">
    <text evidence="2">Glycosylated.</text>
</comment>
<comment type="similarity">
    <text evidence="4">Belongs to the SLC43A transporter (TC 2.A.1.44) family.</text>
</comment>
<organism>
    <name type="scientific">Xenopus tropicalis</name>
    <name type="common">Western clawed frog</name>
    <name type="synonym">Silurana tropicalis</name>
    <dbReference type="NCBI Taxonomy" id="8364"/>
    <lineage>
        <taxon>Eukaryota</taxon>
        <taxon>Metazoa</taxon>
        <taxon>Chordata</taxon>
        <taxon>Craniata</taxon>
        <taxon>Vertebrata</taxon>
        <taxon>Euteleostomi</taxon>
        <taxon>Amphibia</taxon>
        <taxon>Batrachia</taxon>
        <taxon>Anura</taxon>
        <taxon>Pipoidea</taxon>
        <taxon>Pipidae</taxon>
        <taxon>Xenopodinae</taxon>
        <taxon>Xenopus</taxon>
        <taxon>Silurana</taxon>
    </lineage>
</organism>
<name>LAT4_XENTR</name>
<proteinExistence type="evidence at transcript level"/>
<dbReference type="EMBL" id="BC135570">
    <property type="protein sequence ID" value="AAI35571.1"/>
    <property type="molecule type" value="mRNA"/>
</dbReference>
<dbReference type="RefSeq" id="NP_001096206.1">
    <property type="nucleotide sequence ID" value="NM_001102736.1"/>
</dbReference>
<dbReference type="FunCoup" id="A4IHK6">
    <property type="interactions" value="247"/>
</dbReference>
<dbReference type="STRING" id="8364.ENSXETP00000043350"/>
<dbReference type="GlyCosmos" id="A4IHK6">
    <property type="glycosylation" value="4 sites, No reported glycans"/>
</dbReference>
<dbReference type="PaxDb" id="8364-ENSXETP00000048213"/>
<dbReference type="GeneID" id="100124757"/>
<dbReference type="KEGG" id="xtr:100124757"/>
<dbReference type="AGR" id="Xenbase:XB-GENE-987892"/>
<dbReference type="CTD" id="124935"/>
<dbReference type="Xenbase" id="XB-GENE-987892">
    <property type="gene designation" value="slc43a2"/>
</dbReference>
<dbReference type="eggNOG" id="ENOG502QTQJ">
    <property type="taxonomic scope" value="Eukaryota"/>
</dbReference>
<dbReference type="InParanoid" id="A4IHK6"/>
<dbReference type="OrthoDB" id="330047at2759"/>
<dbReference type="Proteomes" id="UP000008143">
    <property type="component" value="Chromosome 2"/>
</dbReference>
<dbReference type="GO" id="GO:0016323">
    <property type="term" value="C:basolateral plasma membrane"/>
    <property type="evidence" value="ECO:0000250"/>
    <property type="project" value="UniProtKB"/>
</dbReference>
<dbReference type="GO" id="GO:0015188">
    <property type="term" value="F:L-isoleucine transmembrane transporter activity"/>
    <property type="evidence" value="ECO:0000250"/>
    <property type="project" value="UniProtKB"/>
</dbReference>
<dbReference type="GO" id="GO:0015190">
    <property type="term" value="F:L-leucine transmembrane transporter activity"/>
    <property type="evidence" value="ECO:0000250"/>
    <property type="project" value="UniProtKB"/>
</dbReference>
<dbReference type="GO" id="GO:0015191">
    <property type="term" value="F:L-methionine transmembrane transporter activity"/>
    <property type="evidence" value="ECO:0000250"/>
    <property type="project" value="UniProtKB"/>
</dbReference>
<dbReference type="GO" id="GO:0015192">
    <property type="term" value="F:L-phenylalanine transmembrane transporter activity"/>
    <property type="evidence" value="ECO:0000250"/>
    <property type="project" value="UniProtKB"/>
</dbReference>
<dbReference type="GO" id="GO:0015818">
    <property type="term" value="P:isoleucine transport"/>
    <property type="evidence" value="ECO:0000250"/>
    <property type="project" value="UniProtKB"/>
</dbReference>
<dbReference type="GO" id="GO:0015820">
    <property type="term" value="P:L-leucine transport"/>
    <property type="evidence" value="ECO:0000250"/>
    <property type="project" value="UniProtKB"/>
</dbReference>
<dbReference type="GO" id="GO:0015821">
    <property type="term" value="P:methionine transport"/>
    <property type="evidence" value="ECO:0000250"/>
    <property type="project" value="UniProtKB"/>
</dbReference>
<dbReference type="GO" id="GO:0015823">
    <property type="term" value="P:phenylalanine transport"/>
    <property type="evidence" value="ECO:0000250"/>
    <property type="project" value="UniProtKB"/>
</dbReference>
<dbReference type="Gene3D" id="1.20.1250.20">
    <property type="entry name" value="MFS general substrate transporter like domains"/>
    <property type="match status" value="1"/>
</dbReference>
<dbReference type="InterPro" id="IPR011701">
    <property type="entry name" value="MFS"/>
</dbReference>
<dbReference type="InterPro" id="IPR036259">
    <property type="entry name" value="MFS_trans_sf"/>
</dbReference>
<dbReference type="PANTHER" id="PTHR20766:SF2">
    <property type="entry name" value="LARGE NEUTRAL AMINO ACIDS TRANSPORTER SMALL SUBUNIT 4"/>
    <property type="match status" value="1"/>
</dbReference>
<dbReference type="PANTHER" id="PTHR20766">
    <property type="entry name" value="LARGE NEUTRAL AMINO ACIDS TRANSPORTER SMALL SUBUNIT 4-LIKE ISOFORM X1"/>
    <property type="match status" value="1"/>
</dbReference>
<dbReference type="Pfam" id="PF07690">
    <property type="entry name" value="MFS_1"/>
    <property type="match status" value="1"/>
</dbReference>
<dbReference type="SUPFAM" id="SSF103473">
    <property type="entry name" value="MFS general substrate transporter"/>
    <property type="match status" value="1"/>
</dbReference>
<evidence type="ECO:0000250" key="1">
    <source>
        <dbReference type="UniProtKB" id="Q8CGA3"/>
    </source>
</evidence>
<evidence type="ECO:0000250" key="2">
    <source>
        <dbReference type="UniProtKB" id="Q8N370"/>
    </source>
</evidence>
<evidence type="ECO:0000255" key="3"/>
<evidence type="ECO:0000305" key="4"/>